<sequence length="287" mass="31741">MAFSPNVLLGGRVCAAVARSGFATRRVTIPGSTSREPDPDFDWEPEERELQEVESALKRQKKAIRFQKIRRQMEASGAPPRTLTWEAMEQIRYLHREFSESWSVPRLAEGFDVSTDVIRRVLKSKFIPTLEQKLKQDQKVLKKIGLARSIPELPGPGDSSKPLSAGQSVSGSLLIPGDEASSRGHGHSTALKAIELNTQSTNITTRQTERNKGVQGLEEGKDFVPVAAGHPTSTCRGARGIDSDGLPSDKRLEELKAGEAGDQIFSKRVVQRGREFFDSNGNFLYRI</sequence>
<dbReference type="EMBL" id="DV893056">
    <property type="status" value="NOT_ANNOTATED_CDS"/>
    <property type="molecule type" value="mRNA"/>
</dbReference>
<dbReference type="EMBL" id="BC113206">
    <property type="protein sequence ID" value="AAI13207.1"/>
    <property type="status" value="ALT_SEQ"/>
    <property type="molecule type" value="mRNA"/>
</dbReference>
<dbReference type="RefSeq" id="NP_001039457.2">
    <property type="nucleotide sequence ID" value="NM_001045992.2"/>
</dbReference>
<dbReference type="FunCoup" id="Q2HJC0">
    <property type="interactions" value="1388"/>
</dbReference>
<dbReference type="STRING" id="9913.ENSBTAP00000019282"/>
<dbReference type="GlyCosmos" id="Q2HJC0">
    <property type="glycosylation" value="1 site, No reported glycans"/>
</dbReference>
<dbReference type="GlyGen" id="Q2HJC0">
    <property type="glycosylation" value="1 site"/>
</dbReference>
<dbReference type="PaxDb" id="9913-ENSBTAP00000019282"/>
<dbReference type="GeneID" id="508115"/>
<dbReference type="KEGG" id="bta:508115"/>
<dbReference type="CTD" id="51335"/>
<dbReference type="VEuPathDB" id="HostDB:ENSBTAG00000014505"/>
<dbReference type="eggNOG" id="ENOG502S5A6">
    <property type="taxonomic scope" value="Eukaryota"/>
</dbReference>
<dbReference type="HOGENOM" id="CLU_076903_1_0_1"/>
<dbReference type="InParanoid" id="Q2HJC0"/>
<dbReference type="OMA" id="KYHIMRR"/>
<dbReference type="OrthoDB" id="6415470at2759"/>
<dbReference type="TreeFam" id="TF324463"/>
<dbReference type="Proteomes" id="UP000009136">
    <property type="component" value="Chromosome 21"/>
</dbReference>
<dbReference type="Bgee" id="ENSBTAG00000014505">
    <property type="expression patterns" value="Expressed in Ammon's horn and 106 other cell types or tissues"/>
</dbReference>
<dbReference type="GO" id="GO:0005576">
    <property type="term" value="C:extracellular region"/>
    <property type="evidence" value="ECO:0007669"/>
    <property type="project" value="UniProtKB-SubCell"/>
</dbReference>
<dbReference type="GO" id="GO:0031966">
    <property type="term" value="C:mitochondrial membrane"/>
    <property type="evidence" value="ECO:0000250"/>
    <property type="project" value="UniProtKB"/>
</dbReference>
<dbReference type="GO" id="GO:0005634">
    <property type="term" value="C:nucleus"/>
    <property type="evidence" value="ECO:0000318"/>
    <property type="project" value="GO_Central"/>
</dbReference>
<dbReference type="GO" id="GO:0019843">
    <property type="term" value="F:rRNA binding"/>
    <property type="evidence" value="ECO:0000250"/>
    <property type="project" value="UniProtKB"/>
</dbReference>
<dbReference type="GO" id="GO:0030154">
    <property type="term" value="P:cell differentiation"/>
    <property type="evidence" value="ECO:0007669"/>
    <property type="project" value="UniProtKB-KW"/>
</dbReference>
<dbReference type="GO" id="GO:0061668">
    <property type="term" value="P:mitochondrial ribosome assembly"/>
    <property type="evidence" value="ECO:0000250"/>
    <property type="project" value="UniProtKB"/>
</dbReference>
<dbReference type="GO" id="GO:0070131">
    <property type="term" value="P:positive regulation of mitochondrial translation"/>
    <property type="evidence" value="ECO:0000250"/>
    <property type="project" value="UniProtKB"/>
</dbReference>
<dbReference type="InterPro" id="IPR010487">
    <property type="entry name" value="NGRN/Rrg9"/>
</dbReference>
<dbReference type="PANTHER" id="PTHR13475">
    <property type="entry name" value="NEUGRIN"/>
    <property type="match status" value="1"/>
</dbReference>
<dbReference type="PANTHER" id="PTHR13475:SF4">
    <property type="entry name" value="NEUGRIN"/>
    <property type="match status" value="1"/>
</dbReference>
<dbReference type="Pfam" id="PF06413">
    <property type="entry name" value="Neugrin"/>
    <property type="match status" value="1"/>
</dbReference>
<protein>
    <recommendedName>
        <fullName>Neugrin</fullName>
    </recommendedName>
    <alternativeName>
        <fullName>Neurite outgrowth-associated protein</fullName>
    </alternativeName>
</protein>
<evidence type="ECO:0000250" key="1">
    <source>
        <dbReference type="UniProtKB" id="Q9NPE2"/>
    </source>
</evidence>
<evidence type="ECO:0000255" key="2"/>
<evidence type="ECO:0000256" key="3">
    <source>
        <dbReference type="SAM" id="MobiDB-lite"/>
    </source>
</evidence>
<evidence type="ECO:0000305" key="4"/>
<keyword id="KW-0217">Developmental protein</keyword>
<keyword id="KW-0221">Differentiation</keyword>
<keyword id="KW-0325">Glycoprotein</keyword>
<keyword id="KW-0472">Membrane</keyword>
<keyword id="KW-0496">Mitochondrion</keyword>
<keyword id="KW-0539">Nucleus</keyword>
<keyword id="KW-1185">Reference proteome</keyword>
<keyword id="KW-0964">Secreted</keyword>
<keyword id="KW-0732">Signal</keyword>
<accession>Q2HJC0</accession>
<proteinExistence type="evidence at transcript level"/>
<gene>
    <name type="primary">NGRN</name>
</gene>
<feature type="signal peptide" evidence="2">
    <location>
        <begin position="1"/>
        <end position="23"/>
    </location>
</feature>
<feature type="chain" id="PRO_0000294482" description="Neugrin">
    <location>
        <begin position="24"/>
        <end position="287"/>
    </location>
</feature>
<feature type="region of interest" description="Disordered" evidence="3">
    <location>
        <begin position="149"/>
        <end position="169"/>
    </location>
</feature>
<feature type="glycosylation site" description="N-linked (GlcNAc...) asparagine" evidence="2">
    <location>
        <position position="202"/>
    </location>
</feature>
<reference key="1">
    <citation type="submission" date="2006-02" db="EMBL/GenBank/DDBJ databases">
        <authorList>
            <consortium name="NIH - Mammalian Gene Collection (MGC) project"/>
        </authorList>
    </citation>
    <scope>NUCLEOTIDE SEQUENCE [LARGE SCALE MRNA]</scope>
    <source>
        <strain>Hereford</strain>
        <tissue>Uterus</tissue>
    </source>
</reference>
<organism>
    <name type="scientific">Bos taurus</name>
    <name type="common">Bovine</name>
    <dbReference type="NCBI Taxonomy" id="9913"/>
    <lineage>
        <taxon>Eukaryota</taxon>
        <taxon>Metazoa</taxon>
        <taxon>Chordata</taxon>
        <taxon>Craniata</taxon>
        <taxon>Vertebrata</taxon>
        <taxon>Euteleostomi</taxon>
        <taxon>Mammalia</taxon>
        <taxon>Eutheria</taxon>
        <taxon>Laurasiatheria</taxon>
        <taxon>Artiodactyla</taxon>
        <taxon>Ruminantia</taxon>
        <taxon>Pecora</taxon>
        <taxon>Bovidae</taxon>
        <taxon>Bovinae</taxon>
        <taxon>Bos</taxon>
    </lineage>
</organism>
<name>NGRN_BOVIN</name>
<comment type="function">
    <text evidence="1">Plays an essential role in mitochondrial ribosome biogenesis. As a component of a functional protein-RNA module, consisting of RCC1L, NGRN, RPUSD3, RPUSD4, TRUB2, FASTKD2 and 16S mitochondrial ribosomal RNA (16S mt-rRNA), controls 16S mt-rRNA abundance and is required for intra-mitochondrial translation of core subunits of the oxidative phosphorylation system.</text>
</comment>
<comment type="subunit">
    <text evidence="1">Forms a regulatory protein-RNA complex, consisting of RCC1L, NGRN, RPUSD3, RPUSD4, TRUB2, FASTKD2 and 16S mt-rRNA. Interacts with 16S mt-rRNA; this interaction is direct.</text>
</comment>
<comment type="subcellular location">
    <subcellularLocation>
        <location evidence="1">Nucleus</location>
    </subcellularLocation>
    <subcellularLocation>
        <location evidence="1">Secreted</location>
    </subcellularLocation>
    <subcellularLocation>
        <location evidence="1">Mitochondrion membrane</location>
    </subcellularLocation>
</comment>
<comment type="similarity">
    <text evidence="4">Belongs to the neugrin family.</text>
</comment>
<comment type="sequence caution" evidence="4">
    <conflict type="miscellaneous discrepancy">
        <sequence resource="EMBL-CDS" id="AAI13207"/>
    </conflict>
    <text>Intron retention. Includes intronic sequence at the 5' end.</text>
</comment>